<evidence type="ECO:0000250" key="1"/>
<evidence type="ECO:0000255" key="2"/>
<evidence type="ECO:0000305" key="3"/>
<comment type="subcellular location">
    <subcellularLocation>
        <location evidence="1">Secreted</location>
    </subcellularLocation>
</comment>
<comment type="similarity">
    <text evidence="3">Belongs to the DEFL family.</text>
</comment>
<sequence length="84" mass="9307">MSKSLQLIVTVLCIFTILVLGEICLAKGQPLEEMVECKEVLWPEECKYDACAFACALKRHGKGGCLEGPDYRSACICQYACKRS</sequence>
<gene>
    <name type="primary">LCR15</name>
    <name type="ordered locus">At4g19038</name>
    <name type="ORF">F13C5</name>
</gene>
<reference evidence="3" key="1">
    <citation type="journal article" date="1999" name="Nature">
        <title>Sequence and analysis of chromosome 4 of the plant Arabidopsis thaliana.</title>
        <authorList>
            <person name="Mayer K.F.X."/>
            <person name="Schueller C."/>
            <person name="Wambutt R."/>
            <person name="Murphy G."/>
            <person name="Volckaert G."/>
            <person name="Pohl T."/>
            <person name="Duesterhoeft A."/>
            <person name="Stiekema W."/>
            <person name="Entian K.-D."/>
            <person name="Terryn N."/>
            <person name="Harris B."/>
            <person name="Ansorge W."/>
            <person name="Brandt P."/>
            <person name="Grivell L.A."/>
            <person name="Rieger M."/>
            <person name="Weichselgartner M."/>
            <person name="de Simone V."/>
            <person name="Obermaier B."/>
            <person name="Mache R."/>
            <person name="Mueller M."/>
            <person name="Kreis M."/>
            <person name="Delseny M."/>
            <person name="Puigdomenech P."/>
            <person name="Watson M."/>
            <person name="Schmidtheini T."/>
            <person name="Reichert B."/>
            <person name="Portetelle D."/>
            <person name="Perez-Alonso M."/>
            <person name="Boutry M."/>
            <person name="Bancroft I."/>
            <person name="Vos P."/>
            <person name="Hoheisel J."/>
            <person name="Zimmermann W."/>
            <person name="Wedler H."/>
            <person name="Ridley P."/>
            <person name="Langham S.-A."/>
            <person name="McCullagh B."/>
            <person name="Bilham L."/>
            <person name="Robben J."/>
            <person name="van der Schueren J."/>
            <person name="Grymonprez B."/>
            <person name="Chuang Y.-J."/>
            <person name="Vandenbussche F."/>
            <person name="Braeken M."/>
            <person name="Weltjens I."/>
            <person name="Voet M."/>
            <person name="Bastiaens I."/>
            <person name="Aert R."/>
            <person name="Defoor E."/>
            <person name="Weitzenegger T."/>
            <person name="Bothe G."/>
            <person name="Ramsperger U."/>
            <person name="Hilbert H."/>
            <person name="Braun M."/>
            <person name="Holzer E."/>
            <person name="Brandt A."/>
            <person name="Peters S."/>
            <person name="van Staveren M."/>
            <person name="Dirkse W."/>
            <person name="Mooijman P."/>
            <person name="Klein Lankhorst R."/>
            <person name="Rose M."/>
            <person name="Hauf J."/>
            <person name="Koetter P."/>
            <person name="Berneiser S."/>
            <person name="Hempel S."/>
            <person name="Feldpausch M."/>
            <person name="Lamberth S."/>
            <person name="Van den Daele H."/>
            <person name="De Keyser A."/>
            <person name="Buysshaert C."/>
            <person name="Gielen J."/>
            <person name="Villarroel R."/>
            <person name="De Clercq R."/>
            <person name="van Montagu M."/>
            <person name="Rogers J."/>
            <person name="Cronin A."/>
            <person name="Quail M.A."/>
            <person name="Bray-Allen S."/>
            <person name="Clark L."/>
            <person name="Doggett J."/>
            <person name="Hall S."/>
            <person name="Kay M."/>
            <person name="Lennard N."/>
            <person name="McLay K."/>
            <person name="Mayes R."/>
            <person name="Pettett A."/>
            <person name="Rajandream M.A."/>
            <person name="Lyne M."/>
            <person name="Benes V."/>
            <person name="Rechmann S."/>
            <person name="Borkova D."/>
            <person name="Bloecker H."/>
            <person name="Scharfe M."/>
            <person name="Grimm M."/>
            <person name="Loehnert T.-H."/>
            <person name="Dose S."/>
            <person name="de Haan M."/>
            <person name="Maarse A.C."/>
            <person name="Schaefer M."/>
            <person name="Mueller-Auer S."/>
            <person name="Gabel C."/>
            <person name="Fuchs M."/>
            <person name="Fartmann B."/>
            <person name="Granderath K."/>
            <person name="Dauner D."/>
            <person name="Herzl A."/>
            <person name="Neumann S."/>
            <person name="Argiriou A."/>
            <person name="Vitale D."/>
            <person name="Liguori R."/>
            <person name="Piravandi E."/>
            <person name="Massenet O."/>
            <person name="Quigley F."/>
            <person name="Clabauld G."/>
            <person name="Muendlein A."/>
            <person name="Felber R."/>
            <person name="Schnabl S."/>
            <person name="Hiller R."/>
            <person name="Schmidt W."/>
            <person name="Lecharny A."/>
            <person name="Aubourg S."/>
            <person name="Chefdor F."/>
            <person name="Cooke R."/>
            <person name="Berger C."/>
            <person name="Monfort A."/>
            <person name="Casacuberta E."/>
            <person name="Gibbons T."/>
            <person name="Weber N."/>
            <person name="Vandenbol M."/>
            <person name="Bargues M."/>
            <person name="Terol J."/>
            <person name="Torres A."/>
            <person name="Perez-Perez A."/>
            <person name="Purnelle B."/>
            <person name="Bent E."/>
            <person name="Johnson S."/>
            <person name="Tacon D."/>
            <person name="Jesse T."/>
            <person name="Heijnen L."/>
            <person name="Schwarz S."/>
            <person name="Scholler P."/>
            <person name="Heber S."/>
            <person name="Francs P."/>
            <person name="Bielke C."/>
            <person name="Frishman D."/>
            <person name="Haase D."/>
            <person name="Lemcke K."/>
            <person name="Mewes H.-W."/>
            <person name="Stocker S."/>
            <person name="Zaccaria P."/>
            <person name="Bevan M."/>
            <person name="Wilson R.K."/>
            <person name="de la Bastide M."/>
            <person name="Habermann K."/>
            <person name="Parnell L."/>
            <person name="Dedhia N."/>
            <person name="Gnoj L."/>
            <person name="Schutz K."/>
            <person name="Huang E."/>
            <person name="Spiegel L."/>
            <person name="Sekhon M."/>
            <person name="Murray J."/>
            <person name="Sheet P."/>
            <person name="Cordes M."/>
            <person name="Abu-Threideh J."/>
            <person name="Stoneking T."/>
            <person name="Kalicki J."/>
            <person name="Graves T."/>
            <person name="Harmon G."/>
            <person name="Edwards J."/>
            <person name="Latreille P."/>
            <person name="Courtney L."/>
            <person name="Cloud J."/>
            <person name="Abbott A."/>
            <person name="Scott K."/>
            <person name="Johnson D."/>
            <person name="Minx P."/>
            <person name="Bentley D."/>
            <person name="Fulton B."/>
            <person name="Miller N."/>
            <person name="Greco T."/>
            <person name="Kemp K."/>
            <person name="Kramer J."/>
            <person name="Fulton L."/>
            <person name="Mardis E."/>
            <person name="Dante M."/>
            <person name="Pepin K."/>
            <person name="Hillier L.W."/>
            <person name="Nelson J."/>
            <person name="Spieth J."/>
            <person name="Ryan E."/>
            <person name="Andrews S."/>
            <person name="Geisel C."/>
            <person name="Layman D."/>
            <person name="Du H."/>
            <person name="Ali J."/>
            <person name="Berghoff A."/>
            <person name="Jones K."/>
            <person name="Drone K."/>
            <person name="Cotton M."/>
            <person name="Joshu C."/>
            <person name="Antonoiu B."/>
            <person name="Zidanic M."/>
            <person name="Strong C."/>
            <person name="Sun H."/>
            <person name="Lamar B."/>
            <person name="Yordan C."/>
            <person name="Ma P."/>
            <person name="Zhong J."/>
            <person name="Preston R."/>
            <person name="Vil D."/>
            <person name="Shekher M."/>
            <person name="Matero A."/>
            <person name="Shah R."/>
            <person name="Swaby I.K."/>
            <person name="O'Shaughnessy A."/>
            <person name="Rodriguez M."/>
            <person name="Hoffman J."/>
            <person name="Till S."/>
            <person name="Granat S."/>
            <person name="Shohdy N."/>
            <person name="Hasegawa A."/>
            <person name="Hameed A."/>
            <person name="Lodhi M."/>
            <person name="Johnson A."/>
            <person name="Chen E."/>
            <person name="Marra M.A."/>
            <person name="Martienssen R."/>
            <person name="McCombie W.R."/>
        </authorList>
    </citation>
    <scope>NUCLEOTIDE SEQUENCE [LARGE SCALE GENOMIC DNA]</scope>
    <source>
        <strain>cv. Columbia</strain>
    </source>
</reference>
<reference key="2">
    <citation type="journal article" date="2017" name="Plant J.">
        <title>Araport11: a complete reannotation of the Arabidopsis thaliana reference genome.</title>
        <authorList>
            <person name="Cheng C.Y."/>
            <person name="Krishnakumar V."/>
            <person name="Chan A.P."/>
            <person name="Thibaud-Nissen F."/>
            <person name="Schobel S."/>
            <person name="Town C.D."/>
        </authorList>
    </citation>
    <scope>GENOME REANNOTATION</scope>
    <source>
        <strain>cv. Columbia</strain>
    </source>
</reference>
<reference evidence="3" key="3">
    <citation type="journal article" date="2001" name="Plant Mol. Biol.">
        <title>Two large Arabidopsis thaliana gene families are homologous to the Brassica gene superfamily that encodes pollen coat proteins and the male component of the self-incompatibility response.</title>
        <authorList>
            <person name="Vanoosthuyse V."/>
            <person name="Miege C."/>
            <person name="Dumas C."/>
            <person name="Cock J.M."/>
        </authorList>
    </citation>
    <scope>IDENTIFICATION</scope>
</reference>
<reference key="4">
    <citation type="journal article" date="2005" name="Plant Physiol.">
        <title>Genome organization of more than 300 defensin-like genes in Arabidopsis.</title>
        <authorList>
            <person name="Silverstein K.A.T."/>
            <person name="Graham M.A."/>
            <person name="Paape T.D."/>
            <person name="VandenBosch K.A."/>
        </authorList>
    </citation>
    <scope>GENE FAMILY</scope>
</reference>
<keyword id="KW-0929">Antimicrobial</keyword>
<keyword id="KW-1015">Disulfide bond</keyword>
<keyword id="KW-0295">Fungicide</keyword>
<keyword id="KW-0611">Plant defense</keyword>
<keyword id="KW-1185">Reference proteome</keyword>
<keyword id="KW-0964">Secreted</keyword>
<keyword id="KW-0732">Signal</keyword>
<name>DF140_ARATH</name>
<feature type="signal peptide" evidence="2">
    <location>
        <begin position="1"/>
        <end position="28"/>
    </location>
</feature>
<feature type="chain" id="PRO_0000017257" description="Defensin-like protein 140">
    <location>
        <begin position="29"/>
        <end position="84"/>
    </location>
</feature>
<feature type="disulfide bond" evidence="1">
    <location>
        <begin position="37"/>
        <end position="81"/>
    </location>
</feature>
<feature type="disulfide bond" evidence="1">
    <location>
        <begin position="46"/>
        <end position="65"/>
    </location>
</feature>
<feature type="disulfide bond" evidence="1">
    <location>
        <begin position="51"/>
        <end position="75"/>
    </location>
</feature>
<feature type="disulfide bond" evidence="1">
    <location>
        <begin position="55"/>
        <end position="77"/>
    </location>
</feature>
<accession>P82730</accession>
<proteinExistence type="evidence at transcript level"/>
<protein>
    <recommendedName>
        <fullName>Defensin-like protein 140</fullName>
    </recommendedName>
    <alternativeName>
        <fullName>Low-molecular-weight cysteine-rich protein 15</fullName>
        <shortName>Protein LCR15</shortName>
    </alternativeName>
</protein>
<organism evidence="3">
    <name type="scientific">Arabidopsis thaliana</name>
    <name type="common">Mouse-ear cress</name>
    <dbReference type="NCBI Taxonomy" id="3702"/>
    <lineage>
        <taxon>Eukaryota</taxon>
        <taxon>Viridiplantae</taxon>
        <taxon>Streptophyta</taxon>
        <taxon>Embryophyta</taxon>
        <taxon>Tracheophyta</taxon>
        <taxon>Spermatophyta</taxon>
        <taxon>Magnoliopsida</taxon>
        <taxon>eudicotyledons</taxon>
        <taxon>Gunneridae</taxon>
        <taxon>Pentapetalae</taxon>
        <taxon>rosids</taxon>
        <taxon>malvids</taxon>
        <taxon>Brassicales</taxon>
        <taxon>Brassicaceae</taxon>
        <taxon>Camelineae</taxon>
        <taxon>Arabidopsis</taxon>
    </lineage>
</organism>
<dbReference type="EMBL" id="AL021711">
    <property type="status" value="NOT_ANNOTATED_CDS"/>
    <property type="molecule type" value="Genomic_DNA"/>
</dbReference>
<dbReference type="EMBL" id="AL161550">
    <property type="status" value="NOT_ANNOTATED_CDS"/>
    <property type="molecule type" value="Genomic_DNA"/>
</dbReference>
<dbReference type="EMBL" id="CP002687">
    <property type="protein sequence ID" value="AEE84129.1"/>
    <property type="molecule type" value="Genomic_DNA"/>
</dbReference>
<dbReference type="RefSeq" id="NP_001031669.1">
    <property type="nucleotide sequence ID" value="NM_001036592.3"/>
</dbReference>
<dbReference type="SMR" id="P82730"/>
<dbReference type="STRING" id="3702.P82730"/>
<dbReference type="PaxDb" id="3702-AT4G19038.1"/>
<dbReference type="ProteomicsDB" id="224628"/>
<dbReference type="EnsemblPlants" id="AT4G19038.1">
    <property type="protein sequence ID" value="AT4G19038.1"/>
    <property type="gene ID" value="AT4G19038"/>
</dbReference>
<dbReference type="GeneID" id="3770495"/>
<dbReference type="Gramene" id="AT4G19038.1">
    <property type="protein sequence ID" value="AT4G19038.1"/>
    <property type="gene ID" value="AT4G19038"/>
</dbReference>
<dbReference type="KEGG" id="ath:AT4G19038"/>
<dbReference type="Araport" id="AT4G19038"/>
<dbReference type="TAIR" id="AT4G19038">
    <property type="gene designation" value="LCR15"/>
</dbReference>
<dbReference type="HOGENOM" id="CLU_193259_0_0_1"/>
<dbReference type="InParanoid" id="P82730"/>
<dbReference type="OMA" id="EMVECKE"/>
<dbReference type="PhylomeDB" id="P82730"/>
<dbReference type="PRO" id="PR:P82730"/>
<dbReference type="Proteomes" id="UP000006548">
    <property type="component" value="Chromosome 4"/>
</dbReference>
<dbReference type="ExpressionAtlas" id="P82730">
    <property type="expression patterns" value="baseline and differential"/>
</dbReference>
<dbReference type="GO" id="GO:0005576">
    <property type="term" value="C:extracellular region"/>
    <property type="evidence" value="ECO:0007669"/>
    <property type="project" value="UniProtKB-SubCell"/>
</dbReference>
<dbReference type="GO" id="GO:0050832">
    <property type="term" value="P:defense response to fungus"/>
    <property type="evidence" value="ECO:0007669"/>
    <property type="project" value="UniProtKB-KW"/>
</dbReference>
<dbReference type="GO" id="GO:0031640">
    <property type="term" value="P:killing of cells of another organism"/>
    <property type="evidence" value="ECO:0007669"/>
    <property type="project" value="UniProtKB-KW"/>
</dbReference>
<dbReference type="InterPro" id="IPR010851">
    <property type="entry name" value="DEFL"/>
</dbReference>
<dbReference type="PANTHER" id="PTHR33830:SF10">
    <property type="entry name" value="DEFENSIN-LIKE PROTEIN 122-RELATED"/>
    <property type="match status" value="1"/>
</dbReference>
<dbReference type="PANTHER" id="PTHR33830">
    <property type="entry name" value="DEFENSIN-LIKE PROTEIN 184-RELATED"/>
    <property type="match status" value="1"/>
</dbReference>
<dbReference type="Pfam" id="PF07333">
    <property type="entry name" value="SLR1-BP"/>
    <property type="match status" value="1"/>
</dbReference>